<name>TMP_BPLC2</name>
<protein>
    <recommendedName>
        <fullName evidence="4">Probable tape measure protein</fullName>
        <shortName>TMP</shortName>
    </recommendedName>
    <alternativeName>
        <fullName evidence="4">Gene product 110</fullName>
        <shortName>gp110</shortName>
    </alternativeName>
</protein>
<reference key="1">
    <citation type="journal article" date="1995" name="Appl. Environ. Microbiol.">
        <title>Sequencing and analysis of the prolate-headed lactococcal bacteriophage c2 genome and identification of the structural genes.</title>
        <authorList>
            <person name="Lubbers M.W."/>
            <person name="Waterfield N.R."/>
            <person name="Beresford T.P."/>
            <person name="Le Page R.W."/>
            <person name="Jarvis A.W."/>
        </authorList>
    </citation>
    <scope>NUCLEOTIDE SEQUENCE [GENOMIC DNA]</scope>
</reference>
<reference key="2">
    <citation type="journal article" date="1993" name="Can. J. Microbiol.">
        <title>Sequence analysis of the lysin gene region of the prolate lactococcal bacteriophage c2.</title>
        <authorList>
            <person name="Ward L.J."/>
            <person name="Beresford T.P."/>
            <person name="Lubbers M.W."/>
            <person name="Jarvis B.D."/>
            <person name="Jarvis A.W."/>
        </authorList>
    </citation>
    <scope>NUCLEOTIDE SEQUENCE [LARGE SCALE GENOMIC DNA]</scope>
</reference>
<reference key="3">
    <citation type="journal article" date="1994" name="Mol. Gen. Genet.">
        <title>Sequencing and analysis of the cos region of the lactococcal bacteriophage c2.</title>
        <authorList>
            <person name="Lubbers M.W."/>
            <person name="Ward L.J."/>
            <person name="Beresford T.P."/>
            <person name="Jarvis B.D."/>
            <person name="Jarvis A.W."/>
        </authorList>
    </citation>
    <scope>NUCLEOTIDE SEQUENCE [LARGE SCALE GENOMIC DNA]</scope>
</reference>
<comment type="function">
    <text evidence="1">Serves as a base for tail tube protein polymerization and acts as a template for tail length determination.</text>
</comment>
<comment type="similarity">
    <text evidence="4">Belongs to the Mulikevirus tape measure protein family.</text>
</comment>
<accession>Q38305</accession>
<sequence>MAKEKYVIQAELETKGVLSNAREAQREINNIGRLAKETNKNAQITGSVTMKDKGIKETQRALNLAKQNVDNLTKALANAKMSGATQKQVQALESQLVKAQTQATRLSTELAKVGSEKGTGLSGAVDKMKSAGGSLLGTFSKVGNVVSGISSAIGLVSGGISKAVDLTSGFANTLMDTYDKQIQAQKTLSTTLSDGAKGYEQFNGHIDKGNSLLKSQKTDLNELGATISSYMKVSGDEAFKTVNAINAVGDSLGLGMDTQKQFTYGLAQALGSGTLHAQDFNQMMQSALGAQFRDMLIQAANEMQNVGMTAEQLPDALKKGKVEADLLANTFGDNWASKMAKAQTSLKGIEVSTGGVKRMLKDGQLSVQDFTNVFGDGFTSSLLNAMNTTSDGAVTMENFKDKMEDGVFSTEVMNRAIELFQQKGEKLASSGPSTWAQIREMISNGFNTSALDGFRKGLGDTGLDMSSMGNNATEMSSIVGSKLGQMAGQAVGALTKIIDKNKDGKVSNEEMEGAVNDAKDAVTNFFNKINFTSIQGFLGKIGNAIDELVRFYNWANDAYGAVQNLLSASRQVGGNTGLIGKALGFRKNSTWGDAFSDFHWLTSNIDPLGLKENQGLGQKLLGSRNGQIPLDLQFFAGGREAINKAVDAVQPYARASKGTTATSSIGTQDNSKQDIKIYVQSSADGQRIAKEIYNKLERNGVKLNKR</sequence>
<gene>
    <name evidence="5" type="primary">l10</name>
</gene>
<feature type="chain" id="PRO_0000431942" description="Probable tape measure protein">
    <location>
        <begin position="1"/>
        <end position="706"/>
    </location>
</feature>
<feature type="domain" description="EF-hand 1" evidence="3">
    <location>
        <begin position="271"/>
        <end position="290"/>
    </location>
</feature>
<feature type="domain" description="EF-hand 2" evidence="3">
    <location>
        <begin position="361"/>
        <end position="380"/>
    </location>
</feature>
<feature type="domain" description="EF-hand 3" evidence="3">
    <location>
        <begin position="496"/>
        <end position="521"/>
    </location>
</feature>
<feature type="coiled-coil region" evidence="2">
    <location>
        <begin position="9"/>
        <end position="113"/>
    </location>
</feature>
<feature type="binding site" evidence="3">
    <location>
        <position position="499"/>
    </location>
    <ligand>
        <name>Ca(2+)</name>
        <dbReference type="ChEBI" id="CHEBI:29108"/>
    </ligand>
</feature>
<feature type="binding site" evidence="3">
    <location>
        <position position="501"/>
    </location>
    <ligand>
        <name>Ca(2+)</name>
        <dbReference type="ChEBI" id="CHEBI:29108"/>
    </ligand>
</feature>
<feature type="binding site" evidence="3">
    <location>
        <position position="503"/>
    </location>
    <ligand>
        <name>Ca(2+)</name>
        <dbReference type="ChEBI" id="CHEBI:29108"/>
    </ligand>
</feature>
<feature type="binding site" evidence="3">
    <location>
        <position position="505"/>
    </location>
    <ligand>
        <name>Ca(2+)</name>
        <dbReference type="ChEBI" id="CHEBI:29108"/>
    </ligand>
</feature>
<feature type="binding site" evidence="3">
    <location>
        <position position="510"/>
    </location>
    <ligand>
        <name>Ca(2+)</name>
        <dbReference type="ChEBI" id="CHEBI:29108"/>
    </ligand>
</feature>
<evidence type="ECO:0000250" key="1">
    <source>
        <dbReference type="UniProtKB" id="Q9T1V6"/>
    </source>
</evidence>
<evidence type="ECO:0000255" key="2"/>
<evidence type="ECO:0000255" key="3">
    <source>
        <dbReference type="PROSITE-ProRule" id="PRU00448"/>
    </source>
</evidence>
<evidence type="ECO:0000305" key="4"/>
<evidence type="ECO:0000312" key="5">
    <source>
        <dbReference type="EMBL" id="AAA92189.1"/>
    </source>
</evidence>
<organism>
    <name type="scientific">Lactococcus phage c2</name>
    <dbReference type="NCBI Taxonomy" id="2681624"/>
    <lineage>
        <taxon>Viruses</taxon>
        <taxon>Duplodnaviria</taxon>
        <taxon>Heunggongvirae</taxon>
        <taxon>Uroviricota</taxon>
        <taxon>Caudoviricetes</taxon>
        <taxon>Ceduovirus</taxon>
        <taxon>Ceduovirus c2</taxon>
    </lineage>
</organism>
<proteinExistence type="inferred from homology"/>
<keyword id="KW-0106">Calcium</keyword>
<keyword id="KW-0175">Coiled coil</keyword>
<keyword id="KW-0479">Metal-binding</keyword>
<keyword id="KW-1185">Reference proteome</keyword>
<keyword id="KW-0677">Repeat</keyword>
<keyword id="KW-1188">Viral release from host cell</keyword>
<keyword id="KW-1245">Viral tail assembly</keyword>
<organismHost>
    <name type="scientific">Lactococcus</name>
    <name type="common">lactic streptococci</name>
    <dbReference type="NCBI Taxonomy" id="1357"/>
</organismHost>
<dbReference type="EMBL" id="L48605">
    <property type="protein sequence ID" value="AAA92189.1"/>
    <property type="molecule type" value="Genomic_DNA"/>
</dbReference>
<dbReference type="RefSeq" id="NP_043558.1">
    <property type="nucleotide sequence ID" value="NC_001706.1"/>
</dbReference>
<dbReference type="GeneID" id="1261175"/>
<dbReference type="KEGG" id="vg:1261175"/>
<dbReference type="Proteomes" id="UP000001835">
    <property type="component" value="Genome"/>
</dbReference>
<dbReference type="GO" id="GO:0005509">
    <property type="term" value="F:calcium ion binding"/>
    <property type="evidence" value="ECO:0007669"/>
    <property type="project" value="InterPro"/>
</dbReference>
<dbReference type="GO" id="GO:0098003">
    <property type="term" value="P:viral tail assembly"/>
    <property type="evidence" value="ECO:0007669"/>
    <property type="project" value="UniProtKB-KW"/>
</dbReference>
<dbReference type="InterPro" id="IPR011992">
    <property type="entry name" value="EF-hand-dom_pair"/>
</dbReference>
<dbReference type="InterPro" id="IPR018247">
    <property type="entry name" value="EF_Hand_1_Ca_BS"/>
</dbReference>
<dbReference type="InterPro" id="IPR002048">
    <property type="entry name" value="EF_hand_dom"/>
</dbReference>
<dbReference type="InterPro" id="IPR013491">
    <property type="entry name" value="Tape_meas_N"/>
</dbReference>
<dbReference type="NCBIfam" id="TIGR02675">
    <property type="entry name" value="tape_meas_nterm"/>
    <property type="match status" value="1"/>
</dbReference>
<dbReference type="SUPFAM" id="SSF47473">
    <property type="entry name" value="EF-hand"/>
    <property type="match status" value="1"/>
</dbReference>
<dbReference type="PROSITE" id="PS00018">
    <property type="entry name" value="EF_HAND_1"/>
    <property type="match status" value="1"/>
</dbReference>
<dbReference type="PROSITE" id="PS50222">
    <property type="entry name" value="EF_HAND_2"/>
    <property type="match status" value="3"/>
</dbReference>